<comment type="function">
    <text evidence="1">Protein S19 forms a complex with S13 that binds strongly to the 16S ribosomal RNA.</text>
</comment>
<comment type="similarity">
    <text evidence="1">Belongs to the universal ribosomal protein uS19 family.</text>
</comment>
<feature type="chain" id="PRO_1000211803" description="Small ribosomal subunit protein uS19">
    <location>
        <begin position="1"/>
        <end position="92"/>
    </location>
</feature>
<protein>
    <recommendedName>
        <fullName evidence="1">Small ribosomal subunit protein uS19</fullName>
    </recommendedName>
    <alternativeName>
        <fullName evidence="2">30S ribosomal protein S19</fullName>
    </alternativeName>
</protein>
<name>RS19_ECOBW</name>
<reference key="1">
    <citation type="journal article" date="2009" name="J. Bacteriol.">
        <title>Genomic sequencing reveals regulatory mutations and recombinational events in the widely used MC4100 lineage of Escherichia coli K-12.</title>
        <authorList>
            <person name="Ferenci T."/>
            <person name="Zhou Z."/>
            <person name="Betteridge T."/>
            <person name="Ren Y."/>
            <person name="Liu Y."/>
            <person name="Feng L."/>
            <person name="Reeves P.R."/>
            <person name="Wang L."/>
        </authorList>
    </citation>
    <scope>NUCLEOTIDE SEQUENCE [LARGE SCALE GENOMIC DNA]</scope>
    <source>
        <strain>K12 / MC4100 / BW2952</strain>
    </source>
</reference>
<organism>
    <name type="scientific">Escherichia coli (strain K12 / MC4100 / BW2952)</name>
    <dbReference type="NCBI Taxonomy" id="595496"/>
    <lineage>
        <taxon>Bacteria</taxon>
        <taxon>Pseudomonadati</taxon>
        <taxon>Pseudomonadota</taxon>
        <taxon>Gammaproteobacteria</taxon>
        <taxon>Enterobacterales</taxon>
        <taxon>Enterobacteriaceae</taxon>
        <taxon>Escherichia</taxon>
    </lineage>
</organism>
<proteinExistence type="inferred from homology"/>
<accession>C4ZUH1</accession>
<gene>
    <name evidence="1" type="primary">rpsS</name>
    <name type="ordered locus">BWG_3007</name>
</gene>
<keyword id="KW-0687">Ribonucleoprotein</keyword>
<keyword id="KW-0689">Ribosomal protein</keyword>
<keyword id="KW-0694">RNA-binding</keyword>
<keyword id="KW-0699">rRNA-binding</keyword>
<sequence>MPRSLKKGPFIDLHLLKKVEKAVESGDKKPLRTWSRRSTIFPNMIGLTIAVHNGRQHVPVFVTDEMVGHKLGEFAPTRTYRGHAADKKAKKK</sequence>
<dbReference type="EMBL" id="CP001396">
    <property type="protein sequence ID" value="ACR61791.1"/>
    <property type="molecule type" value="Genomic_DNA"/>
</dbReference>
<dbReference type="RefSeq" id="WP_001138117.1">
    <property type="nucleotide sequence ID" value="NC_012759.1"/>
</dbReference>
<dbReference type="SMR" id="C4ZUH1"/>
<dbReference type="GeneID" id="98390438"/>
<dbReference type="KEGG" id="ebw:BWG_3007"/>
<dbReference type="HOGENOM" id="CLU_144911_0_1_6"/>
<dbReference type="GO" id="GO:0005737">
    <property type="term" value="C:cytoplasm"/>
    <property type="evidence" value="ECO:0007669"/>
    <property type="project" value="UniProtKB-ARBA"/>
</dbReference>
<dbReference type="GO" id="GO:0015935">
    <property type="term" value="C:small ribosomal subunit"/>
    <property type="evidence" value="ECO:0007669"/>
    <property type="project" value="InterPro"/>
</dbReference>
<dbReference type="GO" id="GO:0019843">
    <property type="term" value="F:rRNA binding"/>
    <property type="evidence" value="ECO:0007669"/>
    <property type="project" value="UniProtKB-UniRule"/>
</dbReference>
<dbReference type="GO" id="GO:0003735">
    <property type="term" value="F:structural constituent of ribosome"/>
    <property type="evidence" value="ECO:0007669"/>
    <property type="project" value="InterPro"/>
</dbReference>
<dbReference type="GO" id="GO:0000028">
    <property type="term" value="P:ribosomal small subunit assembly"/>
    <property type="evidence" value="ECO:0007669"/>
    <property type="project" value="TreeGrafter"/>
</dbReference>
<dbReference type="GO" id="GO:0006412">
    <property type="term" value="P:translation"/>
    <property type="evidence" value="ECO:0007669"/>
    <property type="project" value="UniProtKB-UniRule"/>
</dbReference>
<dbReference type="FunFam" id="3.30.860.10:FF:000001">
    <property type="entry name" value="30S ribosomal protein S19"/>
    <property type="match status" value="1"/>
</dbReference>
<dbReference type="Gene3D" id="3.30.860.10">
    <property type="entry name" value="30s Ribosomal Protein S19, Chain A"/>
    <property type="match status" value="1"/>
</dbReference>
<dbReference type="HAMAP" id="MF_00531">
    <property type="entry name" value="Ribosomal_uS19"/>
    <property type="match status" value="1"/>
</dbReference>
<dbReference type="InterPro" id="IPR002222">
    <property type="entry name" value="Ribosomal_uS19"/>
</dbReference>
<dbReference type="InterPro" id="IPR005732">
    <property type="entry name" value="Ribosomal_uS19_bac-type"/>
</dbReference>
<dbReference type="InterPro" id="IPR020934">
    <property type="entry name" value="Ribosomal_uS19_CS"/>
</dbReference>
<dbReference type="InterPro" id="IPR023575">
    <property type="entry name" value="Ribosomal_uS19_SF"/>
</dbReference>
<dbReference type="NCBIfam" id="TIGR01050">
    <property type="entry name" value="rpsS_bact"/>
    <property type="match status" value="1"/>
</dbReference>
<dbReference type="PANTHER" id="PTHR11880">
    <property type="entry name" value="RIBOSOMAL PROTEIN S19P FAMILY MEMBER"/>
    <property type="match status" value="1"/>
</dbReference>
<dbReference type="PANTHER" id="PTHR11880:SF8">
    <property type="entry name" value="SMALL RIBOSOMAL SUBUNIT PROTEIN US19M"/>
    <property type="match status" value="1"/>
</dbReference>
<dbReference type="Pfam" id="PF00203">
    <property type="entry name" value="Ribosomal_S19"/>
    <property type="match status" value="1"/>
</dbReference>
<dbReference type="PIRSF" id="PIRSF002144">
    <property type="entry name" value="Ribosomal_S19"/>
    <property type="match status" value="1"/>
</dbReference>
<dbReference type="PRINTS" id="PR00975">
    <property type="entry name" value="RIBOSOMALS19"/>
</dbReference>
<dbReference type="SUPFAM" id="SSF54570">
    <property type="entry name" value="Ribosomal protein S19"/>
    <property type="match status" value="1"/>
</dbReference>
<dbReference type="PROSITE" id="PS00323">
    <property type="entry name" value="RIBOSOMAL_S19"/>
    <property type="match status" value="1"/>
</dbReference>
<evidence type="ECO:0000255" key="1">
    <source>
        <dbReference type="HAMAP-Rule" id="MF_00531"/>
    </source>
</evidence>
<evidence type="ECO:0000305" key="2"/>